<proteinExistence type="inferred from homology"/>
<protein>
    <recommendedName>
        <fullName>Valine--tRNA ligase, mitochondrial</fullName>
        <ecNumber evidence="2">6.1.1.9</ecNumber>
    </recommendedName>
    <alternativeName>
        <fullName>Valyl-tRNA synthetase</fullName>
        <shortName>ValRS</shortName>
    </alternativeName>
</protein>
<comment type="function">
    <text evidence="2">Catalyzes the attachment of valine to tRNA(Val) in a two-step reaction: valine is first activated by ATP to form Val-AMP and then transferred to the acceptor end of tRNA(Val).</text>
</comment>
<comment type="catalytic activity">
    <reaction evidence="2">
        <text>tRNA(Val) + L-valine + ATP = L-valyl-tRNA(Val) + AMP + diphosphate</text>
        <dbReference type="Rhea" id="RHEA:10704"/>
        <dbReference type="Rhea" id="RHEA-COMP:9672"/>
        <dbReference type="Rhea" id="RHEA-COMP:9708"/>
        <dbReference type="ChEBI" id="CHEBI:30616"/>
        <dbReference type="ChEBI" id="CHEBI:33019"/>
        <dbReference type="ChEBI" id="CHEBI:57762"/>
        <dbReference type="ChEBI" id="CHEBI:78442"/>
        <dbReference type="ChEBI" id="CHEBI:78537"/>
        <dbReference type="ChEBI" id="CHEBI:456215"/>
        <dbReference type="EC" id="6.1.1.9"/>
    </reaction>
</comment>
<comment type="subcellular location">
    <subcellularLocation>
        <location evidence="5">Mitochondrion</location>
    </subcellularLocation>
</comment>
<comment type="similarity">
    <text evidence="5">Belongs to the class-I aminoacyl-tRNA synthetase family.</text>
</comment>
<organism>
    <name type="scientific">Rattus norvegicus</name>
    <name type="common">Rat</name>
    <dbReference type="NCBI Taxonomy" id="10116"/>
    <lineage>
        <taxon>Eukaryota</taxon>
        <taxon>Metazoa</taxon>
        <taxon>Chordata</taxon>
        <taxon>Craniata</taxon>
        <taxon>Vertebrata</taxon>
        <taxon>Euteleostomi</taxon>
        <taxon>Mammalia</taxon>
        <taxon>Eutheria</taxon>
        <taxon>Euarchontoglires</taxon>
        <taxon>Glires</taxon>
        <taxon>Rodentia</taxon>
        <taxon>Myomorpha</taxon>
        <taxon>Muroidea</taxon>
        <taxon>Muridae</taxon>
        <taxon>Murinae</taxon>
        <taxon>Rattus</taxon>
    </lineage>
</organism>
<sequence>MPHLPLASFRPPLWGLRPSWGLARPRALCTQPEPHGSPVSRRNREAKQKRLREKQAALEAGLAEKSKTPAVPTKAWSHKEVVLYEIPTRPGEKKDVSGPLPPAYSPQYVEAAWYQWWVREGFFKPEYQARLPQATGETFSMCIPPPNVTGSLHIGHALTVAIQDAFVRWHRMRGDRVLWIPGSDHAGIATQAVVEKQLWRERRVRRHELSREDFLRAVWQWKQEKGGEIYEQLCALGASLDWDRECFTMDAGSSAAVTEAFVRLYDLGLLYRNRQLVNWSCTLRSAISDIEVESRPLPGRTVLRLPGCPIPVSFGLLVSIAFPVDGDPGTEIVVGTTRPETLPGDVAVAVHPDDPRYTHLHGRQLRHPLTGQHLPLITDTTVQPHVGTGAVKVTPAHSPADAEMGTRHGLTPLSVIAEDGTMTSLCGDWLQGLHRFVAREKIMCTLRERGLFRGLQEHPMVLPICSRSGDVVEYLLKSQWFVRCQEMGDRAAKAVESGALELWPSFHQKSWQHWFAHIGDWCVSRQLWWGHQIPAYRVGGEKAEDDREECWVVGRSEAEARAAAAKQTGRPEAELTLERDPDVLDTWFSSALFPFSALGWPQETPDLARFYPLTLLETGSDLLTFWVGRMVMLGTQLTGQLPFSKVLLHSMVRDRQGRKMSKSLGNVLDPRDIISGQELQVLQAKLRDGNLDQGELAVAAAAQKKDFPYGIPECGTDALRFALCSHGILGGDLHLSVSEVLNYRHFCNKLWNALRFILRALGDDFVPQPAEKVTPSSPMDAWILSRLAFAANECERGFLSRELSLVTHTLYHFWLHNLCDVYLEAVKPVLSSAPCPPGPPQVLFSCADVGLRLLAPLMPFLAEELWQRLPPRQGGSMAPSICVAPYPSGHSLVSRGQESWRQPELEHCFSRVQEIVQALRALRATYQLTRARPHVLLQSSDPGEQGLVQPFLEPLGVLSHCGAVGFLPPGAAAPSGWALAPLGDTIKIYMELQGLVDPQSQLPRLAARRQKLQKQLDDLLNRTVSDGPAERQQRISSLQLELSKLDQAASHLQQLMEEAPDAREL</sequence>
<feature type="transit peptide" description="Mitochondrion" evidence="3">
    <location>
        <begin position="1"/>
        <end position="15"/>
    </location>
</feature>
<feature type="chain" id="PRO_0000338004" description="Valine--tRNA ligase, mitochondrial">
    <location>
        <begin position="16"/>
        <end position="1065"/>
    </location>
</feature>
<feature type="region of interest" description="Disordered" evidence="4">
    <location>
        <begin position="27"/>
        <end position="52"/>
    </location>
</feature>
<feature type="short sequence motif" description="'HIGH' region">
    <location>
        <begin position="146"/>
        <end position="156"/>
    </location>
</feature>
<feature type="short sequence motif" description="'KMSKS' region">
    <location>
        <begin position="659"/>
        <end position="663"/>
    </location>
</feature>
<feature type="compositionally biased region" description="Basic and acidic residues" evidence="4">
    <location>
        <begin position="42"/>
        <end position="52"/>
    </location>
</feature>
<feature type="binding site" evidence="1">
    <location>
        <position position="662"/>
    </location>
    <ligand>
        <name>ATP</name>
        <dbReference type="ChEBI" id="CHEBI:30616"/>
    </ligand>
</feature>
<name>SYVM_RAT</name>
<reference key="1">
    <citation type="journal article" date="2004" name="Genome Res.">
        <title>The genomic sequence and comparative analysis of the rat major histocompatibility complex.</title>
        <authorList>
            <person name="Hurt P."/>
            <person name="Walter L."/>
            <person name="Sudbrak R."/>
            <person name="Klages S."/>
            <person name="Mueller I."/>
            <person name="Shiina T."/>
            <person name="Inoko H."/>
            <person name="Lehrach H."/>
            <person name="Guenther E."/>
            <person name="Reinhardt R."/>
            <person name="Himmelbauer H."/>
        </authorList>
    </citation>
    <scope>NUCLEOTIDE SEQUENCE [LARGE SCALE GENOMIC DNA]</scope>
    <source>
        <strain>Brown Norway</strain>
    </source>
</reference>
<accession>Q6MG21</accession>
<evidence type="ECO:0000250" key="1"/>
<evidence type="ECO:0000250" key="2">
    <source>
        <dbReference type="UniProtKB" id="Q5ST30"/>
    </source>
</evidence>
<evidence type="ECO:0000255" key="3"/>
<evidence type="ECO:0000256" key="4">
    <source>
        <dbReference type="SAM" id="MobiDB-lite"/>
    </source>
</evidence>
<evidence type="ECO:0000305" key="5"/>
<keyword id="KW-0030">Aminoacyl-tRNA synthetase</keyword>
<keyword id="KW-0067">ATP-binding</keyword>
<keyword id="KW-0436">Ligase</keyword>
<keyword id="KW-0496">Mitochondrion</keyword>
<keyword id="KW-0547">Nucleotide-binding</keyword>
<keyword id="KW-0648">Protein biosynthesis</keyword>
<keyword id="KW-1185">Reference proteome</keyword>
<keyword id="KW-0809">Transit peptide</keyword>
<gene>
    <name type="primary">Vars2</name>
</gene>
<dbReference type="EC" id="6.1.1.9" evidence="2"/>
<dbReference type="EMBL" id="BX883047">
    <property type="protein sequence ID" value="CAE84026.1"/>
    <property type="molecule type" value="Genomic_DNA"/>
</dbReference>
<dbReference type="RefSeq" id="NP_998728.1">
    <property type="nucleotide sequence ID" value="NM_213563.1"/>
</dbReference>
<dbReference type="SMR" id="Q6MG21"/>
<dbReference type="FunCoup" id="Q6MG21">
    <property type="interactions" value="240"/>
</dbReference>
<dbReference type="STRING" id="10116.ENSRNOP00000046565"/>
<dbReference type="CarbonylDB" id="Q6MG21"/>
<dbReference type="GlyGen" id="Q6MG21">
    <property type="glycosylation" value="1 site"/>
</dbReference>
<dbReference type="PhosphoSitePlus" id="Q6MG21"/>
<dbReference type="PaxDb" id="10116-ENSRNOP00000046565"/>
<dbReference type="GeneID" id="309596"/>
<dbReference type="KEGG" id="rno:309596"/>
<dbReference type="UCSC" id="RGD:1303122">
    <property type="organism name" value="rat"/>
</dbReference>
<dbReference type="AGR" id="RGD:1303122"/>
<dbReference type="CTD" id="57176"/>
<dbReference type="RGD" id="1303122">
    <property type="gene designation" value="Vars2"/>
</dbReference>
<dbReference type="eggNOG" id="KOG0432">
    <property type="taxonomic scope" value="Eukaryota"/>
</dbReference>
<dbReference type="HOGENOM" id="CLU_001493_0_1_1"/>
<dbReference type="InParanoid" id="Q6MG21"/>
<dbReference type="OrthoDB" id="32789at9989"/>
<dbReference type="PhylomeDB" id="Q6MG21"/>
<dbReference type="TreeFam" id="TF354250"/>
<dbReference type="PRO" id="PR:Q6MG21"/>
<dbReference type="Proteomes" id="UP000002494">
    <property type="component" value="Unplaced"/>
</dbReference>
<dbReference type="GO" id="GO:0005829">
    <property type="term" value="C:cytosol"/>
    <property type="evidence" value="ECO:0000318"/>
    <property type="project" value="GO_Central"/>
</dbReference>
<dbReference type="GO" id="GO:0005739">
    <property type="term" value="C:mitochondrion"/>
    <property type="evidence" value="ECO:0007669"/>
    <property type="project" value="UniProtKB-SubCell"/>
</dbReference>
<dbReference type="GO" id="GO:0002161">
    <property type="term" value="F:aminoacyl-tRNA deacylase activity"/>
    <property type="evidence" value="ECO:0007669"/>
    <property type="project" value="InterPro"/>
</dbReference>
<dbReference type="GO" id="GO:0005524">
    <property type="term" value="F:ATP binding"/>
    <property type="evidence" value="ECO:0007669"/>
    <property type="project" value="UniProtKB-KW"/>
</dbReference>
<dbReference type="GO" id="GO:0004832">
    <property type="term" value="F:valine-tRNA ligase activity"/>
    <property type="evidence" value="ECO:0000250"/>
    <property type="project" value="UniProtKB"/>
</dbReference>
<dbReference type="GO" id="GO:0006438">
    <property type="term" value="P:valyl-tRNA aminoacylation"/>
    <property type="evidence" value="ECO:0000318"/>
    <property type="project" value="GO_Central"/>
</dbReference>
<dbReference type="CDD" id="cd07962">
    <property type="entry name" value="Anticodon_Ia_Val"/>
    <property type="match status" value="1"/>
</dbReference>
<dbReference type="CDD" id="cd00817">
    <property type="entry name" value="ValRS_core"/>
    <property type="match status" value="1"/>
</dbReference>
<dbReference type="FunFam" id="1.10.730.10:FF:000019">
    <property type="entry name" value="Valine--tRNA ligase, mitochondrial"/>
    <property type="match status" value="1"/>
</dbReference>
<dbReference type="FunFam" id="3.40.50.620:FF:000020">
    <property type="entry name" value="Valine--tRNA ligase, mitochondrial"/>
    <property type="match status" value="1"/>
</dbReference>
<dbReference type="FunFam" id="3.40.50.620:FF:000120">
    <property type="entry name" value="Valine--tRNA ligase, mitochondrial"/>
    <property type="match status" value="1"/>
</dbReference>
<dbReference type="FunFam" id="3.90.740.10:FF:000007">
    <property type="entry name" value="Valine--tRNA ligase, mitochondrial"/>
    <property type="match status" value="1"/>
</dbReference>
<dbReference type="FunFam" id="3.90.740.10:FF:000014">
    <property type="entry name" value="valine--tRNA ligase, mitochondrial"/>
    <property type="match status" value="1"/>
</dbReference>
<dbReference type="Gene3D" id="3.40.50.620">
    <property type="entry name" value="HUPs"/>
    <property type="match status" value="2"/>
</dbReference>
<dbReference type="Gene3D" id="1.10.730.10">
    <property type="entry name" value="Isoleucyl-tRNA Synthetase, Domain 1"/>
    <property type="match status" value="1"/>
</dbReference>
<dbReference type="Gene3D" id="3.90.740.10">
    <property type="entry name" value="Valyl/Leucyl/Isoleucyl-tRNA synthetase, editing domain"/>
    <property type="match status" value="2"/>
</dbReference>
<dbReference type="InterPro" id="IPR001412">
    <property type="entry name" value="aa-tRNA-synth_I_CS"/>
</dbReference>
<dbReference type="InterPro" id="IPR002300">
    <property type="entry name" value="aa-tRNA-synth_Ia"/>
</dbReference>
<dbReference type="InterPro" id="IPR033705">
    <property type="entry name" value="Anticodon_Ia_Val"/>
</dbReference>
<dbReference type="InterPro" id="IPR013155">
    <property type="entry name" value="M/V/L/I-tRNA-synth_anticd-bd"/>
</dbReference>
<dbReference type="InterPro" id="IPR014729">
    <property type="entry name" value="Rossmann-like_a/b/a_fold"/>
</dbReference>
<dbReference type="InterPro" id="IPR009080">
    <property type="entry name" value="tRNAsynth_Ia_anticodon-bd"/>
</dbReference>
<dbReference type="InterPro" id="IPR009008">
    <property type="entry name" value="Val/Leu/Ile-tRNA-synth_edit"/>
</dbReference>
<dbReference type="InterPro" id="IPR002303">
    <property type="entry name" value="Valyl-tRNA_ligase"/>
</dbReference>
<dbReference type="NCBIfam" id="NF004349">
    <property type="entry name" value="PRK05729.1"/>
    <property type="match status" value="1"/>
</dbReference>
<dbReference type="NCBIfam" id="TIGR00422">
    <property type="entry name" value="valS"/>
    <property type="match status" value="1"/>
</dbReference>
<dbReference type="PANTHER" id="PTHR11946:SF71">
    <property type="entry name" value="VALINE--TRNA LIGASE, MITOCHONDRIAL"/>
    <property type="match status" value="1"/>
</dbReference>
<dbReference type="PANTHER" id="PTHR11946">
    <property type="entry name" value="VALYL-TRNA SYNTHETASES"/>
    <property type="match status" value="1"/>
</dbReference>
<dbReference type="Pfam" id="PF08264">
    <property type="entry name" value="Anticodon_1"/>
    <property type="match status" value="1"/>
</dbReference>
<dbReference type="Pfam" id="PF00133">
    <property type="entry name" value="tRNA-synt_1"/>
    <property type="match status" value="1"/>
</dbReference>
<dbReference type="PRINTS" id="PR00986">
    <property type="entry name" value="TRNASYNTHVAL"/>
</dbReference>
<dbReference type="SUPFAM" id="SSF47323">
    <property type="entry name" value="Anticodon-binding domain of a subclass of class I aminoacyl-tRNA synthetases"/>
    <property type="match status" value="1"/>
</dbReference>
<dbReference type="SUPFAM" id="SSF52374">
    <property type="entry name" value="Nucleotidylyl transferase"/>
    <property type="match status" value="1"/>
</dbReference>
<dbReference type="SUPFAM" id="SSF50677">
    <property type="entry name" value="ValRS/IleRS/LeuRS editing domain"/>
    <property type="match status" value="1"/>
</dbReference>
<dbReference type="PROSITE" id="PS00178">
    <property type="entry name" value="AA_TRNA_LIGASE_I"/>
    <property type="match status" value="1"/>
</dbReference>